<sequence>MDKIEVRGARTHNLKNINLVIPRDKLIVVTGLSGSGKSSLAFDTLYAEGQRRYVESLSAYARQFLSLMEKPDVDHIEGLSPAISIEQKSTSHNPRSTVGTITEIHDYLRLLYARVGEPRCPDHDVPLAAQTVSQMVDNVLSQPEGKRLMLLAPIIKERKGEHTKTLENLASQGYIRARIDGEVCDLSDPPKLELQKKHTIEVVVDRFKVRDDLTQRLAESFETALELSGGTAVVADMDDPKAEELLFSANFACPICGYSMRELEPRLFSFNNPAGACPTCDGLGVQQYFDPDRVIQNPELSLAGGAIRGWDRRNFYYFQMLKSLADHYKFDVEAPWGSLSANVHKVVLYGSGKENIEFKYMNDRGDTSIRRHPFEGVLHNMERRYKETESSAVREELAKFISNRPCASCEGTRLRREARHVYVENTPLPAISDMSIGHAMEFFNNLKLAGQRAKIAEKILKEIGDRLKFLVNVGLNYLTLSRSAETLSGGEAQRIRLASQIGAGLVGVMYVLDEPSIGLHQRDNERLLGTLIHLRDLGNTVIVVEHDEDAIRAADHVIDIGPGAGVHGGEVVAEGPLEAIMAVPESLTGQYMSGKRKIEVPKKRVPANPEKVLKLTGARGNNLKDVTLTLPVGLFTCITGVSGSGKSTLINDTLFPIAQRQLNGATIAEPAPYRDIQGLEHFDKVIDIDQSPIGRTPRSNPATYTGVFTPVRELFAGVPESRARGYTPGRFSFNVRGGRCEACQGDGVIKVEMHFLPDIYVPCDQCKGKRYNRETLEIKYKGKTIHEVLDMTIEEAREFFDAVPALARKLQTLMDVGLTYIRLGQSATTLSGGEAQRVKLARELSKRGTGQTLYILDEPTTGLHFADIQQLLDVLHKLRDQGNTIVVIEHNLDVIKTADWIVDLGPEGGSGGGEILVSGTPETVAECKASHTARFLKPML</sequence>
<protein>
    <recommendedName>
        <fullName evidence="1">UvrABC system protein A</fullName>
        <shortName evidence="1">UvrA protein</shortName>
    </recommendedName>
    <alternativeName>
        <fullName evidence="1">Excinuclease ABC subunit A</fullName>
    </alternativeName>
</protein>
<evidence type="ECO:0000255" key="1">
    <source>
        <dbReference type="HAMAP-Rule" id="MF_00205"/>
    </source>
</evidence>
<organism>
    <name type="scientific">Escherichia coli O6:H1 (strain CFT073 / ATCC 700928 / UPEC)</name>
    <dbReference type="NCBI Taxonomy" id="199310"/>
    <lineage>
        <taxon>Bacteria</taxon>
        <taxon>Pseudomonadati</taxon>
        <taxon>Pseudomonadota</taxon>
        <taxon>Gammaproteobacteria</taxon>
        <taxon>Enterobacterales</taxon>
        <taxon>Enterobacteriaceae</taxon>
        <taxon>Escherichia</taxon>
    </lineage>
</organism>
<comment type="function">
    <text evidence="1">The UvrABC repair system catalyzes the recognition and processing of DNA lesions. UvrA is an ATPase and a DNA-binding protein. A damage recognition complex composed of 2 UvrA and 2 UvrB subunits scans DNA for abnormalities. When the presence of a lesion has been verified by UvrB, the UvrA molecules dissociate.</text>
</comment>
<comment type="subunit">
    <text evidence="1">Forms a heterotetramer with UvrB during the search for lesions.</text>
</comment>
<comment type="subcellular location">
    <subcellularLocation>
        <location evidence="1">Cytoplasm</location>
    </subcellularLocation>
</comment>
<comment type="similarity">
    <text evidence="1">Belongs to the ABC transporter superfamily. UvrA family.</text>
</comment>
<accession>Q8FB02</accession>
<gene>
    <name evidence="1" type="primary">uvrA</name>
    <name type="ordered locus">c5048</name>
</gene>
<name>UVRA_ECOL6</name>
<reference key="1">
    <citation type="journal article" date="2002" name="Proc. Natl. Acad. Sci. U.S.A.">
        <title>Extensive mosaic structure revealed by the complete genome sequence of uropathogenic Escherichia coli.</title>
        <authorList>
            <person name="Welch R.A."/>
            <person name="Burland V."/>
            <person name="Plunkett G. III"/>
            <person name="Redford P."/>
            <person name="Roesch P."/>
            <person name="Rasko D."/>
            <person name="Buckles E.L."/>
            <person name="Liou S.-R."/>
            <person name="Boutin A."/>
            <person name="Hackett J."/>
            <person name="Stroud D."/>
            <person name="Mayhew G.F."/>
            <person name="Rose D.J."/>
            <person name="Zhou S."/>
            <person name="Schwartz D.C."/>
            <person name="Perna N.T."/>
            <person name="Mobley H.L.T."/>
            <person name="Donnenberg M.S."/>
            <person name="Blattner F.R."/>
        </authorList>
    </citation>
    <scope>NUCLEOTIDE SEQUENCE [LARGE SCALE GENOMIC DNA]</scope>
    <source>
        <strain>CFT073 / ATCC 700928 / UPEC</strain>
    </source>
</reference>
<proteinExistence type="inferred from homology"/>
<keyword id="KW-0067">ATP-binding</keyword>
<keyword id="KW-0963">Cytoplasm</keyword>
<keyword id="KW-0227">DNA damage</keyword>
<keyword id="KW-0228">DNA excision</keyword>
<keyword id="KW-0234">DNA repair</keyword>
<keyword id="KW-0238">DNA-binding</keyword>
<keyword id="KW-0267">Excision nuclease</keyword>
<keyword id="KW-0479">Metal-binding</keyword>
<keyword id="KW-0547">Nucleotide-binding</keyword>
<keyword id="KW-1185">Reference proteome</keyword>
<keyword id="KW-0677">Repeat</keyword>
<keyword id="KW-0742">SOS response</keyword>
<keyword id="KW-0862">Zinc</keyword>
<keyword id="KW-0863">Zinc-finger</keyword>
<dbReference type="EMBL" id="AE014075">
    <property type="protein sequence ID" value="AAN83474.1"/>
    <property type="molecule type" value="Genomic_DNA"/>
</dbReference>
<dbReference type="RefSeq" id="WP_000357764.1">
    <property type="nucleotide sequence ID" value="NZ_CP051263.1"/>
</dbReference>
<dbReference type="SMR" id="Q8FB02"/>
<dbReference type="STRING" id="199310.c5048"/>
<dbReference type="KEGG" id="ecc:c5048"/>
<dbReference type="eggNOG" id="COG0178">
    <property type="taxonomic scope" value="Bacteria"/>
</dbReference>
<dbReference type="HOGENOM" id="CLU_001370_0_2_6"/>
<dbReference type="BioCyc" id="ECOL199310:C5048-MONOMER"/>
<dbReference type="Proteomes" id="UP000001410">
    <property type="component" value="Chromosome"/>
</dbReference>
<dbReference type="GO" id="GO:0005737">
    <property type="term" value="C:cytoplasm"/>
    <property type="evidence" value="ECO:0007669"/>
    <property type="project" value="UniProtKB-SubCell"/>
</dbReference>
<dbReference type="GO" id="GO:0009380">
    <property type="term" value="C:excinuclease repair complex"/>
    <property type="evidence" value="ECO:0007669"/>
    <property type="project" value="InterPro"/>
</dbReference>
<dbReference type="GO" id="GO:0005524">
    <property type="term" value="F:ATP binding"/>
    <property type="evidence" value="ECO:0007669"/>
    <property type="project" value="UniProtKB-UniRule"/>
</dbReference>
<dbReference type="GO" id="GO:0016887">
    <property type="term" value="F:ATP hydrolysis activity"/>
    <property type="evidence" value="ECO:0007669"/>
    <property type="project" value="InterPro"/>
</dbReference>
<dbReference type="GO" id="GO:0003677">
    <property type="term" value="F:DNA binding"/>
    <property type="evidence" value="ECO:0007669"/>
    <property type="project" value="UniProtKB-UniRule"/>
</dbReference>
<dbReference type="GO" id="GO:0009381">
    <property type="term" value="F:excinuclease ABC activity"/>
    <property type="evidence" value="ECO:0007669"/>
    <property type="project" value="UniProtKB-UniRule"/>
</dbReference>
<dbReference type="GO" id="GO:0008270">
    <property type="term" value="F:zinc ion binding"/>
    <property type="evidence" value="ECO:0007669"/>
    <property type="project" value="UniProtKB-UniRule"/>
</dbReference>
<dbReference type="GO" id="GO:0006289">
    <property type="term" value="P:nucleotide-excision repair"/>
    <property type="evidence" value="ECO:0007669"/>
    <property type="project" value="UniProtKB-UniRule"/>
</dbReference>
<dbReference type="GO" id="GO:0009432">
    <property type="term" value="P:SOS response"/>
    <property type="evidence" value="ECO:0007669"/>
    <property type="project" value="UniProtKB-UniRule"/>
</dbReference>
<dbReference type="CDD" id="cd03270">
    <property type="entry name" value="ABC_UvrA_I"/>
    <property type="match status" value="1"/>
</dbReference>
<dbReference type="CDD" id="cd03271">
    <property type="entry name" value="ABC_UvrA_II"/>
    <property type="match status" value="1"/>
</dbReference>
<dbReference type="FunFam" id="1.10.8.280:FF:000001">
    <property type="entry name" value="UvrABC system protein A"/>
    <property type="match status" value="1"/>
</dbReference>
<dbReference type="FunFam" id="1.20.1580.10:FF:000002">
    <property type="entry name" value="UvrABC system protein A"/>
    <property type="match status" value="1"/>
</dbReference>
<dbReference type="FunFam" id="1.20.1580.10:FF:000003">
    <property type="entry name" value="UvrABC system protein A"/>
    <property type="match status" value="1"/>
</dbReference>
<dbReference type="Gene3D" id="1.10.8.280">
    <property type="entry name" value="ABC transporter ATPase domain-like"/>
    <property type="match status" value="1"/>
</dbReference>
<dbReference type="Gene3D" id="1.20.1580.10">
    <property type="entry name" value="ABC transporter ATPase like domain"/>
    <property type="match status" value="2"/>
</dbReference>
<dbReference type="Gene3D" id="3.30.1490.20">
    <property type="entry name" value="ATP-grasp fold, A domain"/>
    <property type="match status" value="1"/>
</dbReference>
<dbReference type="Gene3D" id="3.40.50.300">
    <property type="entry name" value="P-loop containing nucleotide triphosphate hydrolases"/>
    <property type="match status" value="2"/>
</dbReference>
<dbReference type="HAMAP" id="MF_00205">
    <property type="entry name" value="UvrA"/>
    <property type="match status" value="1"/>
</dbReference>
<dbReference type="InterPro" id="IPR003439">
    <property type="entry name" value="ABC_transporter-like_ATP-bd"/>
</dbReference>
<dbReference type="InterPro" id="IPR017871">
    <property type="entry name" value="ABC_transporter-like_CS"/>
</dbReference>
<dbReference type="InterPro" id="IPR013815">
    <property type="entry name" value="ATP_grasp_subdomain_1"/>
</dbReference>
<dbReference type="InterPro" id="IPR027417">
    <property type="entry name" value="P-loop_NTPase"/>
</dbReference>
<dbReference type="InterPro" id="IPR004602">
    <property type="entry name" value="UvrA"/>
</dbReference>
<dbReference type="InterPro" id="IPR041552">
    <property type="entry name" value="UvrA_DNA-bd"/>
</dbReference>
<dbReference type="InterPro" id="IPR041102">
    <property type="entry name" value="UvrA_inter"/>
</dbReference>
<dbReference type="NCBIfam" id="NF001503">
    <property type="entry name" value="PRK00349.1"/>
    <property type="match status" value="1"/>
</dbReference>
<dbReference type="NCBIfam" id="TIGR00630">
    <property type="entry name" value="uvra"/>
    <property type="match status" value="1"/>
</dbReference>
<dbReference type="PANTHER" id="PTHR43152">
    <property type="entry name" value="UVRABC SYSTEM PROTEIN A"/>
    <property type="match status" value="1"/>
</dbReference>
<dbReference type="PANTHER" id="PTHR43152:SF3">
    <property type="entry name" value="UVRABC SYSTEM PROTEIN A"/>
    <property type="match status" value="1"/>
</dbReference>
<dbReference type="Pfam" id="PF00005">
    <property type="entry name" value="ABC_tran"/>
    <property type="match status" value="1"/>
</dbReference>
<dbReference type="Pfam" id="PF17755">
    <property type="entry name" value="UvrA_DNA-bind"/>
    <property type="match status" value="1"/>
</dbReference>
<dbReference type="Pfam" id="PF17760">
    <property type="entry name" value="UvrA_inter"/>
    <property type="match status" value="1"/>
</dbReference>
<dbReference type="SUPFAM" id="SSF52540">
    <property type="entry name" value="P-loop containing nucleoside triphosphate hydrolases"/>
    <property type="match status" value="2"/>
</dbReference>
<dbReference type="PROSITE" id="PS00211">
    <property type="entry name" value="ABC_TRANSPORTER_1"/>
    <property type="match status" value="2"/>
</dbReference>
<dbReference type="PROSITE" id="PS50893">
    <property type="entry name" value="ABC_TRANSPORTER_2"/>
    <property type="match status" value="1"/>
</dbReference>
<feature type="chain" id="PRO_0000093051" description="UvrABC system protein A">
    <location>
        <begin position="1"/>
        <end position="940"/>
    </location>
</feature>
<feature type="domain" description="ABC transporter 1" evidence="1">
    <location>
        <begin position="310"/>
        <end position="587"/>
    </location>
</feature>
<feature type="domain" description="ABC transporter 2" evidence="1">
    <location>
        <begin position="607"/>
        <end position="937"/>
    </location>
</feature>
<feature type="zinc finger region" description="C4-type" evidence="1">
    <location>
        <begin position="253"/>
        <end position="280"/>
    </location>
</feature>
<feature type="zinc finger region" description="C4-type" evidence="1">
    <location>
        <begin position="740"/>
        <end position="766"/>
    </location>
</feature>
<feature type="binding site" evidence="1">
    <location>
        <begin position="31"/>
        <end position="38"/>
    </location>
    <ligand>
        <name>ATP</name>
        <dbReference type="ChEBI" id="CHEBI:30616"/>
    </ligand>
</feature>
<feature type="binding site" evidence="1">
    <location>
        <begin position="640"/>
        <end position="647"/>
    </location>
    <ligand>
        <name>ATP</name>
        <dbReference type="ChEBI" id="CHEBI:30616"/>
    </ligand>
</feature>